<gene>
    <name evidence="3" type="primary">gcsH</name>
    <name type="ordered locus">CTL0534</name>
</gene>
<sequence>MKGQKYYSDYHVWIEPIHSRIVKLGLSSQMREHLGNILHIDLPSVGSFIKEGEELCILESSKSAIEVLSPVSGEVLEVNTALEDDILPVNNATESEGWFVVLQLTEDFRSESFSLEP</sequence>
<name>GCSHL_CHLT2</name>
<accession>B0B7J8</accession>
<dbReference type="EMBL" id="AM884176">
    <property type="protein sequence ID" value="CAP03974.1"/>
    <property type="molecule type" value="Genomic_DNA"/>
</dbReference>
<dbReference type="RefSeq" id="WP_009873697.1">
    <property type="nucleotide sequence ID" value="NC_010287.1"/>
</dbReference>
<dbReference type="RefSeq" id="YP_001654611.1">
    <property type="nucleotide sequence ID" value="NC_010287.1"/>
</dbReference>
<dbReference type="SMR" id="B0B7J8"/>
<dbReference type="KEGG" id="ctb:CTL0534"/>
<dbReference type="PATRIC" id="fig|471472.4.peg.573"/>
<dbReference type="HOGENOM" id="CLU_097408_2_4_0"/>
<dbReference type="Proteomes" id="UP001154402">
    <property type="component" value="Chromosome"/>
</dbReference>
<dbReference type="GO" id="GO:0005829">
    <property type="term" value="C:cytosol"/>
    <property type="evidence" value="ECO:0007669"/>
    <property type="project" value="TreeGrafter"/>
</dbReference>
<dbReference type="GO" id="GO:0005960">
    <property type="term" value="C:glycine cleavage complex"/>
    <property type="evidence" value="ECO:0007669"/>
    <property type="project" value="InterPro"/>
</dbReference>
<dbReference type="GO" id="GO:0019464">
    <property type="term" value="P:glycine decarboxylation via glycine cleavage system"/>
    <property type="evidence" value="ECO:0007669"/>
    <property type="project" value="InterPro"/>
</dbReference>
<dbReference type="CDD" id="cd06848">
    <property type="entry name" value="GCS_H"/>
    <property type="match status" value="1"/>
</dbReference>
<dbReference type="Gene3D" id="2.40.50.100">
    <property type="match status" value="1"/>
</dbReference>
<dbReference type="InterPro" id="IPR003016">
    <property type="entry name" value="2-oxoA_DH_lipoyl-BS"/>
</dbReference>
<dbReference type="InterPro" id="IPR000089">
    <property type="entry name" value="Biotin_lipoyl"/>
</dbReference>
<dbReference type="InterPro" id="IPR002930">
    <property type="entry name" value="GCV_H"/>
</dbReference>
<dbReference type="InterPro" id="IPR033753">
    <property type="entry name" value="GCV_H/Fam206"/>
</dbReference>
<dbReference type="InterPro" id="IPR017514">
    <property type="entry name" value="GcvH_Chlamydia"/>
</dbReference>
<dbReference type="InterPro" id="IPR011053">
    <property type="entry name" value="Single_hybrid_motif"/>
</dbReference>
<dbReference type="NCBIfam" id="TIGR03077">
    <property type="entry name" value="not_gcvH"/>
    <property type="match status" value="1"/>
</dbReference>
<dbReference type="PANTHER" id="PTHR11715">
    <property type="entry name" value="GLYCINE CLEAVAGE SYSTEM H PROTEIN"/>
    <property type="match status" value="1"/>
</dbReference>
<dbReference type="PANTHER" id="PTHR11715:SF3">
    <property type="entry name" value="GLYCINE CLEAVAGE SYSTEM H PROTEIN-RELATED"/>
    <property type="match status" value="1"/>
</dbReference>
<dbReference type="Pfam" id="PF01597">
    <property type="entry name" value="GCV_H"/>
    <property type="match status" value="1"/>
</dbReference>
<dbReference type="SUPFAM" id="SSF51230">
    <property type="entry name" value="Single hybrid motif"/>
    <property type="match status" value="1"/>
</dbReference>
<dbReference type="PROSITE" id="PS50968">
    <property type="entry name" value="BIOTINYL_LIPOYL"/>
    <property type="match status" value="1"/>
</dbReference>
<dbReference type="PROSITE" id="PS00189">
    <property type="entry name" value="LIPOYL"/>
    <property type="match status" value="1"/>
</dbReference>
<proteinExistence type="inferred from homology"/>
<evidence type="ECO:0000255" key="1">
    <source>
        <dbReference type="PROSITE-ProRule" id="PRU01066"/>
    </source>
</evidence>
<evidence type="ECO:0000305" key="2"/>
<evidence type="ECO:0000312" key="3">
    <source>
        <dbReference type="EMBL" id="CAP03974.1"/>
    </source>
</evidence>
<feature type="chain" id="PRO_1000114509" description="Glycine cleavage system H-like protein">
    <location>
        <begin position="1"/>
        <end position="117"/>
    </location>
</feature>
<feature type="domain" description="Lipoyl-binding" evidence="1">
    <location>
        <begin position="21"/>
        <end position="103"/>
    </location>
</feature>
<feature type="modified residue" description="N6-lipoyllysine" evidence="1">
    <location>
        <position position="62"/>
    </location>
</feature>
<protein>
    <recommendedName>
        <fullName evidence="2">Glycine cleavage system H-like protein</fullName>
    </recommendedName>
</protein>
<comment type="cofactor">
    <cofactor evidence="1">
        <name>(R)-lipoate</name>
        <dbReference type="ChEBI" id="CHEBI:83088"/>
    </cofactor>
    <text evidence="1">Binds 1 lipoyl cofactor covalently.</text>
</comment>
<comment type="similarity">
    <text evidence="2">Belongs to the GcvH family.</text>
</comment>
<reference key="1">
    <citation type="journal article" date="2008" name="Genome Res.">
        <title>Chlamydia trachomatis: genome sequence analysis of lymphogranuloma venereum isolates.</title>
        <authorList>
            <person name="Thomson N.R."/>
            <person name="Holden M.T.G."/>
            <person name="Carder C."/>
            <person name="Lennard N."/>
            <person name="Lockey S.J."/>
            <person name="Marsh P."/>
            <person name="Skipp P."/>
            <person name="O'Connor C.D."/>
            <person name="Goodhead I."/>
            <person name="Norbertzcak H."/>
            <person name="Harris B."/>
            <person name="Ormond D."/>
            <person name="Rance R."/>
            <person name="Quail M.A."/>
            <person name="Parkhill J."/>
            <person name="Stephens R.S."/>
            <person name="Clarke I.N."/>
        </authorList>
    </citation>
    <scope>NUCLEOTIDE SEQUENCE [LARGE SCALE GENOMIC DNA]</scope>
    <source>
        <strain>ATCC VR-902B / DSM 19102 / 434/Bu</strain>
    </source>
</reference>
<keyword id="KW-0450">Lipoyl</keyword>
<organism>
    <name type="scientific">Chlamydia trachomatis serovar L2 (strain ATCC VR-902B / DSM 19102 / 434/Bu)</name>
    <dbReference type="NCBI Taxonomy" id="471472"/>
    <lineage>
        <taxon>Bacteria</taxon>
        <taxon>Pseudomonadati</taxon>
        <taxon>Chlamydiota</taxon>
        <taxon>Chlamydiia</taxon>
        <taxon>Chlamydiales</taxon>
        <taxon>Chlamydiaceae</taxon>
        <taxon>Chlamydia/Chlamydophila group</taxon>
        <taxon>Chlamydia</taxon>
    </lineage>
</organism>